<organism>
    <name type="scientific">Avian infectious bursal disease virus (strain Australian 002-73)</name>
    <name type="common">IBDV</name>
    <name type="synonym">Gumboro disease virus</name>
    <dbReference type="NCBI Taxonomy" id="10997"/>
    <lineage>
        <taxon>Viruses</taxon>
        <taxon>Riboviria</taxon>
        <taxon>Orthornavirae</taxon>
        <taxon>Birnaviridae</taxon>
        <taxon>Avibirnavirus</taxon>
        <taxon>Avibirnavirus gumboroense</taxon>
    </lineage>
</organism>
<sequence>MTNLSDQTQQIVPFIRSLLMPTTGPASIPDDTLEKHTLRSETSTYNLTVGDTGSGLIVFFPGFPGSIVGAHYTMQSNGNYKFDQMLLTAQNLPASYNYCRLVSRSLTVRSSTLPGGVYALNGTINAVTFQGSLSELTDVSYNGLMSATANINDKIGNVLVGEGVTVLSLPTSYDLGYVRLGDPIPAIGLDPKMVATCDSSDRPRVYTITAADDYQFSSQYQPGGVTITLFSANIDAITNLSVGGELVFQTSVQGLVLNATIYLVGFDGTTVTTRAVAAGNGLTAGTDNLMPFNLVIPTSEITQPVTSIKLEIVTSKSGGQAGDQMSWLASGNLAVTIHGGNYPGALRPVTLVAYERVATGSVVTVAGVSNFELIPNPELAKNLVTEYGRFDPGAMNYTKLILSERDRLGIKTVWPTREYTDFREYFMEVADLNSPLKIAGAFGFKDIIRAIRRIAVPVVSTLFPPAAPLAHAIGEGVDYLLGDEAGAASGTARAASGKARAASGRIRQLTLAADKGYEVVANLFQVPQNPVVDGILASPGVLRGAHNLDCVLREGATLFPVVITTVEDAMTPKALNSKMFAVIEGVREDLQPPSQRGSFIRTLSGHRVYGYAPDGVLPLETGRDYTVVPIDDVWDDSIMLSKDPIPPIVGNSGNLAIAYMDVFRPKVPIHVAMTGALNAYGEVEKVSFRSTKLATAHRLGLKLAGPGAFDINTGPNWATFIKRFPHNPRDWDRLPYLNLPYLPPSAGRQYHLAMAASEFKETPELESAVRAMEAAADVDPLFQSALSVFMWLEENGIVTDMANFALSDPNAHRMRNFLANAPQAGSKSQRAKYGTAGYGVEARGPTPEEAQREKDTRISKKMEAMGIYFATPEWVALNGHRGPSPGQLKYWQNTREIPDPNEDYLDYVHAEKSRLASEEQILRAATSIYGAPGQAEPPQAFIDEVAKVYEINHGRGPNQEQMKDLLLTAMEMKHRNPRRAPPKPKPKPNAPSQRPPGRLGRWIRTVSDEDLE</sequence>
<proteinExistence type="inferred from homology"/>
<evidence type="ECO:0000250" key="1"/>
<evidence type="ECO:0000255" key="2">
    <source>
        <dbReference type="PROSITE-ProRule" id="PRU00881"/>
    </source>
</evidence>
<evidence type="ECO:0000256" key="3">
    <source>
        <dbReference type="SAM" id="MobiDB-lite"/>
    </source>
</evidence>
<evidence type="ECO:0000305" key="4"/>
<feature type="chain" id="PRO_0000392586" description="Structural polyprotein">
    <location>
        <begin position="1"/>
        <end position="1012"/>
    </location>
</feature>
<feature type="chain" id="PRO_0000392587" description="Precursor of VP2">
    <location>
        <begin position="1"/>
        <end position="512"/>
    </location>
</feature>
<feature type="chain" id="PRO_0000036762" description="Capsid protein VP2" evidence="1">
    <location>
        <begin position="1"/>
        <end position="441"/>
    </location>
</feature>
<feature type="peptide" id="PRO_0000227827" description="Structural peptide 1" evidence="1">
    <location>
        <begin position="442"/>
        <end position="487"/>
    </location>
</feature>
<feature type="peptide" id="PRO_0000227828" description="Structural peptide 2" evidence="1">
    <location>
        <begin position="488"/>
        <end position="494"/>
    </location>
</feature>
<feature type="peptide" id="PRO_0000227829" description="Structural peptide 3" evidence="1">
    <location>
        <begin position="495"/>
        <end position="501"/>
    </location>
</feature>
<feature type="peptide" id="PRO_0000227830" description="Structural peptide 4" evidence="1">
    <location>
        <begin position="502"/>
        <end position="512"/>
    </location>
</feature>
<feature type="chain" id="PRO_0000036763" description="Protease VP4" evidence="1">
    <location>
        <begin position="513"/>
        <end position="755"/>
    </location>
</feature>
<feature type="chain" id="PRO_0000036764" description="Capsid protein VP3" evidence="1">
    <location>
        <begin position="756"/>
        <end position="1012"/>
    </location>
</feature>
<feature type="domain" description="Peptidase S50" evidence="2">
    <location>
        <begin position="513"/>
        <end position="755"/>
    </location>
</feature>
<feature type="region of interest" description="Disordered" evidence="3">
    <location>
        <begin position="970"/>
        <end position="1012"/>
    </location>
</feature>
<feature type="region of interest" description="Interaction with VP1 protein" evidence="1">
    <location>
        <begin position="1003"/>
        <end position="1012"/>
    </location>
</feature>
<feature type="compositionally biased region" description="Basic residues" evidence="3">
    <location>
        <begin position="975"/>
        <end position="986"/>
    </location>
</feature>
<feature type="active site" description="Nucleophile" evidence="2">
    <location>
        <position position="652"/>
    </location>
</feature>
<feature type="active site" evidence="2">
    <location>
        <position position="692"/>
    </location>
</feature>
<feature type="binding site" evidence="1">
    <location>
        <position position="30"/>
    </location>
    <ligand>
        <name>a divalent metal cation</name>
        <dbReference type="ChEBI" id="CHEBI:60240"/>
        <note>ligand shared between trimeric partners</note>
    </ligand>
</feature>
<feature type="site" description="Cleavage; by protease VP4" evidence="1">
    <location>
        <begin position="441"/>
        <end position="442"/>
    </location>
</feature>
<feature type="site" description="Cleavage; by protease VP4" evidence="1">
    <location>
        <begin position="487"/>
        <end position="488"/>
    </location>
</feature>
<feature type="site" description="Cleavage; by protease VP4" evidence="1">
    <location>
        <begin position="494"/>
        <end position="495"/>
    </location>
</feature>
<feature type="site" description="Cleavage; by protease VP4" evidence="1">
    <location>
        <begin position="501"/>
        <end position="502"/>
    </location>
</feature>
<feature type="site" description="Cleavage; by protease VP4" evidence="1">
    <location>
        <begin position="512"/>
        <end position="513"/>
    </location>
</feature>
<feature type="site" description="Cleavage; by protease VP4" evidence="1">
    <location>
        <begin position="755"/>
        <end position="756"/>
    </location>
</feature>
<comment type="function">
    <text evidence="1">Capsid protein VP2 self assembles to form an icosahedral capsid with a T=13 symmetry, about 70 nm in diameter, and consisting of 260 VP2 trimers. The capsid encapsulates the genomic dsRNA. VP2 is also involved in attachment and entry into the host cell by interacting with host ITGA4/ITGB1 (By similarity).</text>
</comment>
<comment type="function">
    <text evidence="1">The precursor of VP2 plays an important role in capsid assembly. First, pre-VP2 and VP2 oligomers assemble to form a procapsid. Then, the pre-VP2 intermediates may be processed into VP2 proteins by proteolytic cleavage mediated by VP4 to obtain the mature virion. The final capsid is composed of pentamers and hexamers but VP2 has a natural tendency to assemble into all-pentameric structures. Therefore pre-VP2 may be required to allow formation of the hexameric structures (By similarity).</text>
</comment>
<comment type="function">
    <text evidence="2">Protease VP4 is a serine protease that cleaves the polyprotein into its final products. Pre-VP2 is first partially cleaved, and may be completely processed by VP4 upon capsid maturation.</text>
</comment>
<comment type="function">
    <text evidence="1">Capsid protein VP3 plays a key role in virion assembly by providing a scaffold for the capsid made of VP2. May self-assemble to form a T=4-like icosahedral inner-capsid composed of at least 180 trimers. Plays a role in genomic RNA packaging by recruiting VP1 into the capsid and interacting with the dsRNA genome segments to form a ribonucleoprotein complex. Additionally, the interaction of the VP3 C-terminal tail with VP1 removes the inherent structural blockade of the polymerase active site. Thus, VP3 can also function as a transcriptional activator (By similarity).</text>
</comment>
<comment type="function">
    <text evidence="1">Structural peptide 1 is a small peptide derived from pre-VP2 C-terminus. It destabilizes and perforates cell membranes, suggesting a role during entry (By similarity).</text>
</comment>
<comment type="function">
    <text evidence="1">Structural peptide 2 is a small peptide derived from pVP2 C-terminus. It is not essential for the virus viability, but viral growth is affected when missing (By similarity).</text>
</comment>
<comment type="function">
    <text evidence="1">Structural peptide 3 is a small peptide derived from pVP2 C-terminus. It is not essential for the virus viability, but viral growth is affected when missing (By similarity).</text>
</comment>
<comment type="function">
    <text evidence="1">Structural peptide 4 is a small peptide derived from pVP2 C-terminus. It is essential for the virus viability (By similarity).</text>
</comment>
<comment type="subunit">
    <molecule>Capsid protein VP2</molecule>
    <text evidence="1">Homotrimer. A central divalent metal stabilizes the VP2 trimer (By similarity). Interacts with host ITGA4/ITGB1.</text>
</comment>
<comment type="subunit">
    <molecule>Capsid protein VP3</molecule>
    <text evidence="1">Homodimer. Interacts (via C-terminus) with VP1 in the cytoplasm. Interacts with VP2 (By similarity).</text>
</comment>
<comment type="subcellular location">
    <molecule>Capsid protein VP2</molecule>
    <subcellularLocation>
        <location evidence="4">Virion</location>
    </subcellularLocation>
    <subcellularLocation>
        <location evidence="4">Host cytoplasm</location>
    </subcellularLocation>
</comment>
<comment type="subcellular location">
    <molecule>Capsid protein VP3</molecule>
    <subcellularLocation>
        <location evidence="4">Virion</location>
    </subcellularLocation>
    <subcellularLocation>
        <location evidence="4">Host cytoplasm</location>
    </subcellularLocation>
</comment>
<comment type="subcellular location">
    <molecule>Structural peptide 1</molecule>
    <subcellularLocation>
        <location evidence="4">Virion</location>
    </subcellularLocation>
    <subcellularLocation>
        <location evidence="4">Host cytoplasm</location>
    </subcellularLocation>
</comment>
<comment type="subcellular location">
    <molecule>Structural peptide 2</molecule>
    <subcellularLocation>
        <location evidence="4">Virion</location>
    </subcellularLocation>
    <subcellularLocation>
        <location evidence="4">Host cytoplasm</location>
    </subcellularLocation>
</comment>
<comment type="subcellular location">
    <molecule>Structural peptide 3</molecule>
    <subcellularLocation>
        <location evidence="4">Virion</location>
    </subcellularLocation>
    <subcellularLocation>
        <location evidence="4">Host cytoplasm</location>
    </subcellularLocation>
</comment>
<comment type="subcellular location">
    <molecule>Structural peptide 4</molecule>
    <subcellularLocation>
        <location evidence="4">Virion</location>
    </subcellularLocation>
    <subcellularLocation>
        <location evidence="4">Host cytoplasm</location>
    </subcellularLocation>
</comment>
<comment type="PTM">
    <text evidence="1">Specific enzymatic cleavages yield mature proteins. The capsid assembly seems to be regulated by polyprotein processing. The protease VP4 cleaves itself off the polyprotein, thus releasing pre-VP2 and VP3 within the infected cell. During capsid assembly, the C-terminus of pre-VP2 is further processed by VP4, giving rise to VP2, the external capsid protein and three small peptides that all stay closely associated with the capsid (By similarity).</text>
</comment>
<comment type="sequence caution" evidence="4">
    <conflict type="erroneous initiation">
        <sequence resource="EMBL-CDS" id="CAA27629"/>
    </conflict>
</comment>
<dbReference type="EC" id="3.4.21.-"/>
<dbReference type="EMBL" id="X03993">
    <property type="protein sequence ID" value="CAA27629.1"/>
    <property type="status" value="ALT_INIT"/>
    <property type="molecule type" value="Genomic_RNA"/>
</dbReference>
<dbReference type="PIR" id="A24382">
    <property type="entry name" value="GNXSAU"/>
</dbReference>
<dbReference type="BMRB" id="P08364"/>
<dbReference type="SMR" id="P08364"/>
<dbReference type="MEROPS" id="S50.002"/>
<dbReference type="GO" id="GO:0030430">
    <property type="term" value="C:host cell cytoplasm"/>
    <property type="evidence" value="ECO:0007669"/>
    <property type="project" value="UniProtKB-SubCell"/>
</dbReference>
<dbReference type="GO" id="GO:0039621">
    <property type="term" value="C:T=13 icosahedral viral capsid"/>
    <property type="evidence" value="ECO:0007669"/>
    <property type="project" value="UniProtKB-KW"/>
</dbReference>
<dbReference type="GO" id="GO:0046872">
    <property type="term" value="F:metal ion binding"/>
    <property type="evidence" value="ECO:0007669"/>
    <property type="project" value="UniProtKB-KW"/>
</dbReference>
<dbReference type="GO" id="GO:0008236">
    <property type="term" value="F:serine-type peptidase activity"/>
    <property type="evidence" value="ECO:0007669"/>
    <property type="project" value="UniProtKB-KW"/>
</dbReference>
<dbReference type="GO" id="GO:0005198">
    <property type="term" value="F:structural molecule activity"/>
    <property type="evidence" value="ECO:0007669"/>
    <property type="project" value="InterPro"/>
</dbReference>
<dbReference type="GO" id="GO:0006508">
    <property type="term" value="P:proteolysis"/>
    <property type="evidence" value="ECO:0007669"/>
    <property type="project" value="UniProtKB-KW"/>
</dbReference>
<dbReference type="FunFam" id="2.60.120.660:FF:000001">
    <property type="entry name" value="Structural polyprotein"/>
    <property type="match status" value="1"/>
</dbReference>
<dbReference type="Gene3D" id="2.60.120.20">
    <property type="match status" value="1"/>
</dbReference>
<dbReference type="Gene3D" id="6.10.250.1030">
    <property type="match status" value="1"/>
</dbReference>
<dbReference type="Gene3D" id="1.10.8.880">
    <property type="entry name" value="Birnavirus VP3 protein, domain 2"/>
    <property type="match status" value="1"/>
</dbReference>
<dbReference type="Gene3D" id="1.10.150.620">
    <property type="entry name" value="Capsid protein VP3, domain 1"/>
    <property type="match status" value="1"/>
</dbReference>
<dbReference type="Gene3D" id="2.60.120.660">
    <property type="entry name" value="icosahedral virus"/>
    <property type="match status" value="1"/>
</dbReference>
<dbReference type="InterPro" id="IPR002662">
    <property type="entry name" value="Birna_VP2"/>
</dbReference>
<dbReference type="InterPro" id="IPR002663">
    <property type="entry name" value="Birna_VP3"/>
</dbReference>
<dbReference type="InterPro" id="IPR043048">
    <property type="entry name" value="Birna_VP3_dom1"/>
</dbReference>
<dbReference type="InterPro" id="IPR043049">
    <property type="entry name" value="Birna_VP3_dom2"/>
</dbReference>
<dbReference type="InterPro" id="IPR025775">
    <property type="entry name" value="Birna_VP4_Prtase_dom"/>
</dbReference>
<dbReference type="InterPro" id="IPR029053">
    <property type="entry name" value="Viral_coat"/>
</dbReference>
<dbReference type="Pfam" id="PF01766">
    <property type="entry name" value="Birna_VP2"/>
    <property type="match status" value="1"/>
</dbReference>
<dbReference type="Pfam" id="PF01767">
    <property type="entry name" value="Birna_VP3"/>
    <property type="match status" value="1"/>
</dbReference>
<dbReference type="Pfam" id="PF01768">
    <property type="entry name" value="Birna_VP4"/>
    <property type="match status" value="1"/>
</dbReference>
<dbReference type="SUPFAM" id="SSF88633">
    <property type="entry name" value="Positive stranded ssRNA viruses"/>
    <property type="match status" value="1"/>
</dbReference>
<dbReference type="PROSITE" id="PS51548">
    <property type="entry name" value="BIRNAVIRUS_VP4_PRO"/>
    <property type="match status" value="1"/>
</dbReference>
<reference key="1">
    <citation type="journal article" date="1986" name="Nucleic Acids Res.">
        <title>Genomic structure of the large RNA segment of infectious bursal disease virus.</title>
        <authorList>
            <person name="Hudson P.J."/>
            <person name="McKern N.M."/>
            <person name="Power B.E."/>
            <person name="Azad A.A."/>
        </authorList>
    </citation>
    <scope>NUCLEOTIDE SEQUENCE [GENOMIC RNA]</scope>
</reference>
<reference key="2">
    <citation type="journal article" date="1986" name="FEBS Lett.">
        <title>Predicted sequence of the host-protective immunogen of infectious bursal disease virus.</title>
        <authorList>
            <person name="Hudson P.J."/>
            <person name="McKern N.M."/>
            <person name="Fahey K.J."/>
            <person name="Azad A.A."/>
        </authorList>
    </citation>
    <scope>NUCLEOTIDE SEQUENCE [GENOMIC RNA] OF 703-1012</scope>
</reference>
<organismHost>
    <name type="scientific">Gallus gallus</name>
    <name type="common">Chicken</name>
    <dbReference type="NCBI Taxonomy" id="9031"/>
</organismHost>
<organismHost>
    <name type="scientific">Meleagris gallopavo</name>
    <name type="common">Wild turkey</name>
    <dbReference type="NCBI Taxonomy" id="9103"/>
</organismHost>
<name>POLS_IBDVA</name>
<protein>
    <recommendedName>
        <fullName>Structural polyprotein</fullName>
        <shortName>PP</shortName>
    </recommendedName>
    <component>
        <recommendedName>
            <fullName>Precursor of VP2</fullName>
            <shortName>Pre-VP2</shortName>
        </recommendedName>
    </component>
    <component>
        <recommendedName>
            <fullName>Capsid protein VP2</fullName>
        </recommendedName>
    </component>
    <component>
        <recommendedName>
            <fullName>Structural peptide 1</fullName>
            <shortName>p1</shortName>
        </recommendedName>
        <alternativeName>
            <fullName>pep46</fullName>
        </alternativeName>
    </component>
    <component>
        <recommendedName>
            <fullName>Structural peptide 2</fullName>
            <shortName>p2</shortName>
        </recommendedName>
        <alternativeName>
            <fullName>pep7a</fullName>
        </alternativeName>
    </component>
    <component>
        <recommendedName>
            <fullName>Structural peptide 3</fullName>
            <shortName>p3</shortName>
        </recommendedName>
        <alternativeName>
            <fullName>pep7b</fullName>
        </alternativeName>
    </component>
    <component>
        <recommendedName>
            <fullName>Structural peptide 4</fullName>
            <shortName>p4</shortName>
        </recommendedName>
        <alternativeName>
            <fullName>pep11</fullName>
        </alternativeName>
    </component>
    <component>
        <recommendedName>
            <fullName>Protease VP4</fullName>
            <ecNumber>3.4.21.-</ecNumber>
        </recommendedName>
        <alternativeName>
            <fullName>Non-structural protein VP4</fullName>
            <shortName>NS</shortName>
        </alternativeName>
    </component>
    <component>
        <recommendedName>
            <fullName>Capsid protein VP3</fullName>
        </recommendedName>
    </component>
</protein>
<keyword id="KW-0167">Capsid protein</keyword>
<keyword id="KW-1035">Host cytoplasm</keyword>
<keyword id="KW-0378">Hydrolase</keyword>
<keyword id="KW-0479">Metal-binding</keyword>
<keyword id="KW-0645">Protease</keyword>
<keyword id="KW-0720">Serine protease</keyword>
<keyword id="KW-1146">T=13 icosahedral capsid protein</keyword>
<keyword id="KW-0946">Virion</keyword>
<accession>P08364</accession>